<keyword id="KW-0067">ATP-binding</keyword>
<keyword id="KW-0342">GTP-binding</keyword>
<keyword id="KW-0547">Nucleotide-binding</keyword>
<keyword id="KW-1185">Reference proteome</keyword>
<evidence type="ECO:0000255" key="1">
    <source>
        <dbReference type="HAMAP-Rule" id="MF_00636"/>
    </source>
</evidence>
<accession>A8MLW9</accession>
<sequence>MKFVIITGLSGAGKSQAIKYMEDFGYYCVDNLPPTLLTKFAELCYQSQGPMAKVALVIDIRGGMFFEDLFSSLERMTEAGYQYEILFLDASDKALIKRFKETRRSHPLSVDGSIPEGIALEREKLKELKQKAKHIIDTTNLRSAQLKEELNNIYVEGNQSNNLIISIVSFGFKHGIPLDADLVFDVRFLPNPFYIEDLKELTGNDKKVRDYVMNAPISVEFSNKLNDMISFLIPQYIEEGKNQLVIAIGCTGGMHRSVTIAHVLYNYLKERGYRVLMNHRDSNLSIGRKG</sequence>
<gene>
    <name type="ordered locus">Clos_0574</name>
</gene>
<dbReference type="EMBL" id="CP000853">
    <property type="protein sequence ID" value="ABW18136.1"/>
    <property type="molecule type" value="Genomic_DNA"/>
</dbReference>
<dbReference type="RefSeq" id="WP_012158450.1">
    <property type="nucleotide sequence ID" value="NC_009922.1"/>
</dbReference>
<dbReference type="SMR" id="A8MLW9"/>
<dbReference type="STRING" id="350688.Clos_0574"/>
<dbReference type="KEGG" id="aoe:Clos_0574"/>
<dbReference type="eggNOG" id="COG1660">
    <property type="taxonomic scope" value="Bacteria"/>
</dbReference>
<dbReference type="HOGENOM" id="CLU_059558_0_0_9"/>
<dbReference type="OrthoDB" id="9784461at2"/>
<dbReference type="Proteomes" id="UP000000269">
    <property type="component" value="Chromosome"/>
</dbReference>
<dbReference type="GO" id="GO:0005524">
    <property type="term" value="F:ATP binding"/>
    <property type="evidence" value="ECO:0007669"/>
    <property type="project" value="UniProtKB-UniRule"/>
</dbReference>
<dbReference type="GO" id="GO:0005525">
    <property type="term" value="F:GTP binding"/>
    <property type="evidence" value="ECO:0007669"/>
    <property type="project" value="UniProtKB-UniRule"/>
</dbReference>
<dbReference type="Gene3D" id="3.40.50.300">
    <property type="entry name" value="P-loop containing nucleotide triphosphate hydrolases"/>
    <property type="match status" value="1"/>
</dbReference>
<dbReference type="HAMAP" id="MF_00636">
    <property type="entry name" value="RapZ_like"/>
    <property type="match status" value="1"/>
</dbReference>
<dbReference type="InterPro" id="IPR027417">
    <property type="entry name" value="P-loop_NTPase"/>
</dbReference>
<dbReference type="InterPro" id="IPR005337">
    <property type="entry name" value="RapZ-like"/>
</dbReference>
<dbReference type="InterPro" id="IPR053930">
    <property type="entry name" value="RapZ-like_N"/>
</dbReference>
<dbReference type="InterPro" id="IPR053931">
    <property type="entry name" value="RapZ_C"/>
</dbReference>
<dbReference type="NCBIfam" id="NF003828">
    <property type="entry name" value="PRK05416.1"/>
    <property type="match status" value="1"/>
</dbReference>
<dbReference type="PANTHER" id="PTHR30448">
    <property type="entry name" value="RNASE ADAPTER PROTEIN RAPZ"/>
    <property type="match status" value="1"/>
</dbReference>
<dbReference type="PANTHER" id="PTHR30448:SF0">
    <property type="entry name" value="RNASE ADAPTER PROTEIN RAPZ"/>
    <property type="match status" value="1"/>
</dbReference>
<dbReference type="Pfam" id="PF22740">
    <property type="entry name" value="PapZ_C"/>
    <property type="match status" value="1"/>
</dbReference>
<dbReference type="Pfam" id="PF03668">
    <property type="entry name" value="RapZ-like_N"/>
    <property type="match status" value="1"/>
</dbReference>
<dbReference type="PIRSF" id="PIRSF005052">
    <property type="entry name" value="P-loopkin"/>
    <property type="match status" value="1"/>
</dbReference>
<dbReference type="SUPFAM" id="SSF52540">
    <property type="entry name" value="P-loop containing nucleoside triphosphate hydrolases"/>
    <property type="match status" value="1"/>
</dbReference>
<organism>
    <name type="scientific">Alkaliphilus oremlandii (strain OhILAs)</name>
    <name type="common">Clostridium oremlandii (strain OhILAs)</name>
    <dbReference type="NCBI Taxonomy" id="350688"/>
    <lineage>
        <taxon>Bacteria</taxon>
        <taxon>Bacillati</taxon>
        <taxon>Bacillota</taxon>
        <taxon>Clostridia</taxon>
        <taxon>Peptostreptococcales</taxon>
        <taxon>Natronincolaceae</taxon>
        <taxon>Alkaliphilus</taxon>
    </lineage>
</organism>
<proteinExistence type="inferred from homology"/>
<comment type="function">
    <text evidence="1">Displays ATPase and GTPase activities.</text>
</comment>
<comment type="similarity">
    <text evidence="1">Belongs to the RapZ-like family.</text>
</comment>
<name>Y574_ALKOO</name>
<protein>
    <recommendedName>
        <fullName evidence="1">Nucleotide-binding protein Clos_0574</fullName>
    </recommendedName>
</protein>
<reference key="1">
    <citation type="submission" date="2007-10" db="EMBL/GenBank/DDBJ databases">
        <title>Complete genome of Alkaliphilus oremlandii OhILAs.</title>
        <authorList>
            <person name="Copeland A."/>
            <person name="Lucas S."/>
            <person name="Lapidus A."/>
            <person name="Barry K."/>
            <person name="Detter J.C."/>
            <person name="Glavina del Rio T."/>
            <person name="Hammon N."/>
            <person name="Israni S."/>
            <person name="Dalin E."/>
            <person name="Tice H."/>
            <person name="Pitluck S."/>
            <person name="Chain P."/>
            <person name="Malfatti S."/>
            <person name="Shin M."/>
            <person name="Vergez L."/>
            <person name="Schmutz J."/>
            <person name="Larimer F."/>
            <person name="Land M."/>
            <person name="Hauser L."/>
            <person name="Kyrpides N."/>
            <person name="Mikhailova N."/>
            <person name="Stolz J.F."/>
            <person name="Dawson A."/>
            <person name="Fisher E."/>
            <person name="Crable B."/>
            <person name="Perera E."/>
            <person name="Lisak J."/>
            <person name="Ranganathan M."/>
            <person name="Basu P."/>
            <person name="Richardson P."/>
        </authorList>
    </citation>
    <scope>NUCLEOTIDE SEQUENCE [LARGE SCALE GENOMIC DNA]</scope>
    <source>
        <strain>OhILAs</strain>
    </source>
</reference>
<feature type="chain" id="PRO_1000061433" description="Nucleotide-binding protein Clos_0574">
    <location>
        <begin position="1"/>
        <end position="290"/>
    </location>
</feature>
<feature type="binding site" evidence="1">
    <location>
        <begin position="8"/>
        <end position="15"/>
    </location>
    <ligand>
        <name>ATP</name>
        <dbReference type="ChEBI" id="CHEBI:30616"/>
    </ligand>
</feature>
<feature type="binding site" evidence="1">
    <location>
        <begin position="59"/>
        <end position="62"/>
    </location>
    <ligand>
        <name>GTP</name>
        <dbReference type="ChEBI" id="CHEBI:37565"/>
    </ligand>
</feature>